<dbReference type="EMBL" id="FM211187">
    <property type="protein sequence ID" value="CAR69651.1"/>
    <property type="molecule type" value="Genomic_DNA"/>
</dbReference>
<dbReference type="RefSeq" id="WP_000351907.1">
    <property type="nucleotide sequence ID" value="NC_011900.1"/>
</dbReference>
<dbReference type="SMR" id="B8ZNI0"/>
<dbReference type="KEGG" id="sne:SPN23F18890"/>
<dbReference type="HOGENOM" id="CLU_038686_3_3_9"/>
<dbReference type="GO" id="GO:0005737">
    <property type="term" value="C:cytoplasm"/>
    <property type="evidence" value="ECO:0007669"/>
    <property type="project" value="UniProtKB-SubCell"/>
</dbReference>
<dbReference type="GO" id="GO:0051301">
    <property type="term" value="P:cell division"/>
    <property type="evidence" value="ECO:0007669"/>
    <property type="project" value="UniProtKB-KW"/>
</dbReference>
<dbReference type="GO" id="GO:0007059">
    <property type="term" value="P:chromosome segregation"/>
    <property type="evidence" value="ECO:0007669"/>
    <property type="project" value="UniProtKB-UniRule"/>
</dbReference>
<dbReference type="GO" id="GO:0006260">
    <property type="term" value="P:DNA replication"/>
    <property type="evidence" value="ECO:0007669"/>
    <property type="project" value="UniProtKB-UniRule"/>
</dbReference>
<dbReference type="Gene3D" id="6.10.250.2410">
    <property type="match status" value="1"/>
</dbReference>
<dbReference type="Gene3D" id="1.10.10.580">
    <property type="entry name" value="Structural maintenance of chromosome 1. Chain E"/>
    <property type="match status" value="1"/>
</dbReference>
<dbReference type="HAMAP" id="MF_01805">
    <property type="entry name" value="ScpA"/>
    <property type="match status" value="1"/>
</dbReference>
<dbReference type="InterPro" id="IPR003768">
    <property type="entry name" value="ScpA"/>
</dbReference>
<dbReference type="InterPro" id="IPR023093">
    <property type="entry name" value="ScpA-like_C"/>
</dbReference>
<dbReference type="NCBIfam" id="NF000993">
    <property type="entry name" value="PRK00104.1-2"/>
    <property type="match status" value="1"/>
</dbReference>
<dbReference type="PANTHER" id="PTHR33969">
    <property type="entry name" value="SEGREGATION AND CONDENSATION PROTEIN A"/>
    <property type="match status" value="1"/>
</dbReference>
<dbReference type="PANTHER" id="PTHR33969:SF2">
    <property type="entry name" value="SEGREGATION AND CONDENSATION PROTEIN A"/>
    <property type="match status" value="1"/>
</dbReference>
<dbReference type="Pfam" id="PF02616">
    <property type="entry name" value="SMC_ScpA"/>
    <property type="match status" value="1"/>
</dbReference>
<evidence type="ECO:0000255" key="1">
    <source>
        <dbReference type="HAMAP-Rule" id="MF_01805"/>
    </source>
</evidence>
<keyword id="KW-0131">Cell cycle</keyword>
<keyword id="KW-0132">Cell division</keyword>
<keyword id="KW-0159">Chromosome partition</keyword>
<keyword id="KW-0963">Cytoplasm</keyword>
<protein>
    <recommendedName>
        <fullName evidence="1">Segregation and condensation protein A</fullName>
    </recommendedName>
</protein>
<accession>B8ZNI0</accession>
<comment type="function">
    <text evidence="1">Participates in chromosomal partition during cell division. May act via the formation of a condensin-like complex containing Smc and ScpB that pull DNA away from mid-cell into both cell halves.</text>
</comment>
<comment type="subunit">
    <text evidence="1">Component of a cohesin-like complex composed of ScpA, ScpB and the Smc homodimer, in which ScpA and ScpB bind to the head domain of Smc. The presence of the three proteins is required for the association of the complex with DNA.</text>
</comment>
<comment type="subcellular location">
    <subcellularLocation>
        <location evidence="1">Cytoplasm</location>
    </subcellularLocation>
    <text evidence="1">Associated with two foci at the outer edges of the nucleoid region in young cells, and at four foci within both cell halves in older cells.</text>
</comment>
<comment type="similarity">
    <text evidence="1">Belongs to the ScpA family.</text>
</comment>
<name>SCPA_STRPJ</name>
<organism>
    <name type="scientific">Streptococcus pneumoniae (strain ATCC 700669 / Spain 23F-1)</name>
    <dbReference type="NCBI Taxonomy" id="561276"/>
    <lineage>
        <taxon>Bacteria</taxon>
        <taxon>Bacillati</taxon>
        <taxon>Bacillota</taxon>
        <taxon>Bacilli</taxon>
        <taxon>Lactobacillales</taxon>
        <taxon>Streptococcaceae</taxon>
        <taxon>Streptococcus</taxon>
    </lineage>
</organism>
<sequence>MDIKLKDFEGPLDLLLHLVSKYQMDIYDVPITEVIEQYLAYVSTLQAMRLEVTGEYMVMASQLMLIKSRKLLPKVAEVTDLGDDLEQDLLSQIEEYRKFKLLGEHLEAKHQERAQYYSKAPTELIYEDAELVHDKTTIDLFLAFSNILAKKKEEFAQNHTTILRDEYKIEDMMIIVKESLIGRDQLRLQDLFKEAQNVQEVITLFLATLELIKTQELILVQEESFGDIYLMEKKEESQVPQS</sequence>
<gene>
    <name evidence="1" type="primary">scpA</name>
    <name type="ordered locus">SPN23F18890</name>
</gene>
<reference key="1">
    <citation type="journal article" date="2009" name="J. Bacteriol.">
        <title>Role of conjugative elements in the evolution of the multidrug-resistant pandemic clone Streptococcus pneumoniae Spain23F ST81.</title>
        <authorList>
            <person name="Croucher N.J."/>
            <person name="Walker D."/>
            <person name="Romero P."/>
            <person name="Lennard N."/>
            <person name="Paterson G.K."/>
            <person name="Bason N.C."/>
            <person name="Mitchell A.M."/>
            <person name="Quail M.A."/>
            <person name="Andrew P.W."/>
            <person name="Parkhill J."/>
            <person name="Bentley S.D."/>
            <person name="Mitchell T.J."/>
        </authorList>
    </citation>
    <scope>NUCLEOTIDE SEQUENCE [LARGE SCALE GENOMIC DNA]</scope>
    <source>
        <strain>ATCC 700669 / Spain 23F-1</strain>
    </source>
</reference>
<feature type="chain" id="PRO_1000187572" description="Segregation and condensation protein A">
    <location>
        <begin position="1"/>
        <end position="242"/>
    </location>
</feature>
<proteinExistence type="inferred from homology"/>